<accession>A0A1B0GTU1</accession>
<sequence>MPNQGEDCYFFFYSTCTKGDSCPFRHCEAALGNETVCTLWQEGRCFRRVCRFRHMEIDKKRSEIPCYWENQPTGCQKLNCVFHHNRGRYVDGLFLPPSKSVLPTVPESPEEEVKASQLSVQQNKLSVQSNTSPQLRSVMKVESSENVPSPKHPPVVINAADDDEDDDDQFSEEGDETKTPTLQPTPEVHNGLRVTSVRKPAVNIKQGECLHFGIKTLEEIKSKKMKEKSEEQGEGSSGVSSLLLHPEPVPGPEKENVRTVVRTVTLSTKQGEEPLVRLGLTETLGKRKFSTGGDSDPPLKRSLAQRLGKKVEAPETNTDETPKKAQVSKSLKERLGMSADPNNEDATDKVNKVGEIHVKTLEEMLLERASQKHGESQTKLKTEGPSKTDDSTSGARSSSTIRIKTFSEVLAEEEHRQQEAERQKSKKDTTCIKLKTDSEIKKTVVLPPIVASKGQSEEPAGKTKSMQEVHMKTVEEIKLEKALRVQQSSESSTSSPSQHEATPGARLLLRITKRTWRKEEKKLQEGNEVDFLSRVRMEATEASVETTGVDITKIQVKRCEIMRETRMQKQQEREKSVLTPLQGDVASCNTQVAEKPVLTAVPGITWHLTKQLPTKSSQKVEVETSGIADSLLNVKWSAQTLEKRGEAKPTVNVKQSVVKVVSSPKLAPKRKAVEMHPAVTAAVKPLSSSSVLQEPPAKKAAVDAVVLLDSEDKSVTVPEAENPRDSLVLPPTQSSSDSSPPEVSGPSSSQMSMKTRRLSSASTGKPPLSVEDDFEKLTWEISGGKLEAEIDLDPGKDEDDLPLEL</sequence>
<organism>
    <name type="scientific">Homo sapiens</name>
    <name type="common">Human</name>
    <dbReference type="NCBI Taxonomy" id="9606"/>
    <lineage>
        <taxon>Eukaryota</taxon>
        <taxon>Metazoa</taxon>
        <taxon>Chordata</taxon>
        <taxon>Craniata</taxon>
        <taxon>Vertebrata</taxon>
        <taxon>Euteleostomi</taxon>
        <taxon>Mammalia</taxon>
        <taxon>Eutheria</taxon>
        <taxon>Euarchontoglires</taxon>
        <taxon>Primates</taxon>
        <taxon>Haplorrhini</taxon>
        <taxon>Catarrhini</taxon>
        <taxon>Hominidae</taxon>
        <taxon>Homo</taxon>
    </lineage>
</organism>
<comment type="function">
    <text evidence="4">May play a role in mRNA transport.</text>
</comment>
<keyword id="KW-0175">Coiled coil</keyword>
<keyword id="KW-0479">Metal-binding</keyword>
<keyword id="KW-1267">Proteomics identification</keyword>
<keyword id="KW-1185">Reference proteome</keyword>
<keyword id="KW-0677">Repeat</keyword>
<keyword id="KW-0862">Zinc</keyword>
<keyword id="KW-0863">Zinc-finger</keyword>
<protein>
    <recommendedName>
        <fullName evidence="4">Zinc finger CCCH domain-containing protein 11B</fullName>
    </recommendedName>
</protein>
<reference key="1">
    <citation type="journal article" date="2006" name="Nature">
        <title>The DNA sequence and biological annotation of human chromosome 1.</title>
        <authorList>
            <person name="Gregory S.G."/>
            <person name="Barlow K.F."/>
            <person name="McLay K.E."/>
            <person name="Kaul R."/>
            <person name="Swarbreck D."/>
            <person name="Dunham A."/>
            <person name="Scott C.E."/>
            <person name="Howe K.L."/>
            <person name="Woodfine K."/>
            <person name="Spencer C.C.A."/>
            <person name="Jones M.C."/>
            <person name="Gillson C."/>
            <person name="Searle S."/>
            <person name="Zhou Y."/>
            <person name="Kokocinski F."/>
            <person name="McDonald L."/>
            <person name="Evans R."/>
            <person name="Phillips K."/>
            <person name="Atkinson A."/>
            <person name="Cooper R."/>
            <person name="Jones C."/>
            <person name="Hall R.E."/>
            <person name="Andrews T.D."/>
            <person name="Lloyd C."/>
            <person name="Ainscough R."/>
            <person name="Almeida J.P."/>
            <person name="Ambrose K.D."/>
            <person name="Anderson F."/>
            <person name="Andrew R.W."/>
            <person name="Ashwell R.I.S."/>
            <person name="Aubin K."/>
            <person name="Babbage A.K."/>
            <person name="Bagguley C.L."/>
            <person name="Bailey J."/>
            <person name="Beasley H."/>
            <person name="Bethel G."/>
            <person name="Bird C.P."/>
            <person name="Bray-Allen S."/>
            <person name="Brown J.Y."/>
            <person name="Brown A.J."/>
            <person name="Buckley D."/>
            <person name="Burton J."/>
            <person name="Bye J."/>
            <person name="Carder C."/>
            <person name="Chapman J.C."/>
            <person name="Clark S.Y."/>
            <person name="Clarke G."/>
            <person name="Clee C."/>
            <person name="Cobley V."/>
            <person name="Collier R.E."/>
            <person name="Corby N."/>
            <person name="Coville G.J."/>
            <person name="Davies J."/>
            <person name="Deadman R."/>
            <person name="Dunn M."/>
            <person name="Earthrowl M."/>
            <person name="Ellington A.G."/>
            <person name="Errington H."/>
            <person name="Frankish A."/>
            <person name="Frankland J."/>
            <person name="French L."/>
            <person name="Garner P."/>
            <person name="Garnett J."/>
            <person name="Gay L."/>
            <person name="Ghori M.R.J."/>
            <person name="Gibson R."/>
            <person name="Gilby L.M."/>
            <person name="Gillett W."/>
            <person name="Glithero R.J."/>
            <person name="Grafham D.V."/>
            <person name="Griffiths C."/>
            <person name="Griffiths-Jones S."/>
            <person name="Grocock R."/>
            <person name="Hammond S."/>
            <person name="Harrison E.S.I."/>
            <person name="Hart E."/>
            <person name="Haugen E."/>
            <person name="Heath P.D."/>
            <person name="Holmes S."/>
            <person name="Holt K."/>
            <person name="Howden P.J."/>
            <person name="Hunt A.R."/>
            <person name="Hunt S.E."/>
            <person name="Hunter G."/>
            <person name="Isherwood J."/>
            <person name="James R."/>
            <person name="Johnson C."/>
            <person name="Johnson D."/>
            <person name="Joy A."/>
            <person name="Kay M."/>
            <person name="Kershaw J.K."/>
            <person name="Kibukawa M."/>
            <person name="Kimberley A.M."/>
            <person name="King A."/>
            <person name="Knights A.J."/>
            <person name="Lad H."/>
            <person name="Laird G."/>
            <person name="Lawlor S."/>
            <person name="Leongamornlert D.A."/>
            <person name="Lloyd D.M."/>
            <person name="Loveland J."/>
            <person name="Lovell J."/>
            <person name="Lush M.J."/>
            <person name="Lyne R."/>
            <person name="Martin S."/>
            <person name="Mashreghi-Mohammadi M."/>
            <person name="Matthews L."/>
            <person name="Matthews N.S.W."/>
            <person name="McLaren S."/>
            <person name="Milne S."/>
            <person name="Mistry S."/>
            <person name="Moore M.J.F."/>
            <person name="Nickerson T."/>
            <person name="O'Dell C.N."/>
            <person name="Oliver K."/>
            <person name="Palmeiri A."/>
            <person name="Palmer S.A."/>
            <person name="Parker A."/>
            <person name="Patel D."/>
            <person name="Pearce A.V."/>
            <person name="Peck A.I."/>
            <person name="Pelan S."/>
            <person name="Phelps K."/>
            <person name="Phillimore B.J."/>
            <person name="Plumb R."/>
            <person name="Rajan J."/>
            <person name="Raymond C."/>
            <person name="Rouse G."/>
            <person name="Saenphimmachak C."/>
            <person name="Sehra H.K."/>
            <person name="Sheridan E."/>
            <person name="Shownkeen R."/>
            <person name="Sims S."/>
            <person name="Skuce C.D."/>
            <person name="Smith M."/>
            <person name="Steward C."/>
            <person name="Subramanian S."/>
            <person name="Sycamore N."/>
            <person name="Tracey A."/>
            <person name="Tromans A."/>
            <person name="Van Helmond Z."/>
            <person name="Wall M."/>
            <person name="Wallis J.M."/>
            <person name="White S."/>
            <person name="Whitehead S.L."/>
            <person name="Wilkinson J.E."/>
            <person name="Willey D.L."/>
            <person name="Williams H."/>
            <person name="Wilming L."/>
            <person name="Wray P.W."/>
            <person name="Wu Z."/>
            <person name="Coulson A."/>
            <person name="Vaudin M."/>
            <person name="Sulston J.E."/>
            <person name="Durbin R.M."/>
            <person name="Hubbard T."/>
            <person name="Wooster R."/>
            <person name="Dunham I."/>
            <person name="Carter N.P."/>
            <person name="McVean G."/>
            <person name="Ross M.T."/>
            <person name="Harrow J."/>
            <person name="Olson M.V."/>
            <person name="Beck S."/>
            <person name="Rogers J."/>
            <person name="Bentley D.R."/>
        </authorList>
    </citation>
    <scope>NUCLEOTIDE SEQUENCE [LARGE SCALE GENOMIC DNA]</scope>
</reference>
<name>ZC11B_HUMAN</name>
<feature type="chain" id="PRO_0000444564" description="Zinc finger CCCH domain-containing protein 11B">
    <location>
        <begin position="1"/>
        <end position="805"/>
    </location>
</feature>
<feature type="zinc finger region" description="C3H1-type 1" evidence="2">
    <location>
        <begin position="2"/>
        <end position="29"/>
    </location>
</feature>
<feature type="zinc finger region" description="C3H1-type 2" evidence="2">
    <location>
        <begin position="31"/>
        <end position="57"/>
    </location>
</feature>
<feature type="region of interest" description="Disordered" evidence="3">
    <location>
        <begin position="140"/>
        <end position="194"/>
    </location>
</feature>
<feature type="region of interest" description="Disordered" evidence="3">
    <location>
        <begin position="223"/>
        <end position="351"/>
    </location>
</feature>
<feature type="region of interest" description="Disordered" evidence="3">
    <location>
        <begin position="364"/>
        <end position="433"/>
    </location>
</feature>
<feature type="region of interest" description="Disordered" evidence="3">
    <location>
        <begin position="449"/>
        <end position="468"/>
    </location>
</feature>
<feature type="region of interest" description="Disordered" evidence="3">
    <location>
        <begin position="481"/>
        <end position="506"/>
    </location>
</feature>
<feature type="region of interest" description="Disordered" evidence="3">
    <location>
        <begin position="715"/>
        <end position="805"/>
    </location>
</feature>
<feature type="coiled-coil region" evidence="1">
    <location>
        <begin position="403"/>
        <end position="423"/>
    </location>
</feature>
<feature type="compositionally biased region" description="Acidic residues" evidence="3">
    <location>
        <begin position="160"/>
        <end position="175"/>
    </location>
</feature>
<feature type="compositionally biased region" description="Basic and acidic residues" evidence="3">
    <location>
        <begin position="364"/>
        <end position="390"/>
    </location>
</feature>
<feature type="compositionally biased region" description="Polar residues" evidence="3">
    <location>
        <begin position="391"/>
        <end position="402"/>
    </location>
</feature>
<feature type="compositionally biased region" description="Basic and acidic residues" evidence="3">
    <location>
        <begin position="412"/>
        <end position="433"/>
    </location>
</feature>
<feature type="compositionally biased region" description="Basic and acidic residues" evidence="3">
    <location>
        <begin position="455"/>
        <end position="468"/>
    </location>
</feature>
<feature type="compositionally biased region" description="Low complexity" evidence="3">
    <location>
        <begin position="486"/>
        <end position="498"/>
    </location>
</feature>
<feature type="compositionally biased region" description="Low complexity" evidence="3">
    <location>
        <begin position="730"/>
        <end position="749"/>
    </location>
</feature>
<feature type="compositionally biased region" description="Polar residues" evidence="3">
    <location>
        <begin position="750"/>
        <end position="763"/>
    </location>
</feature>
<feature type="compositionally biased region" description="Acidic residues" evidence="3">
    <location>
        <begin position="789"/>
        <end position="805"/>
    </location>
</feature>
<dbReference type="EMBL" id="AL356364">
    <property type="status" value="NOT_ANNOTATED_CDS"/>
    <property type="molecule type" value="Genomic_DNA"/>
</dbReference>
<dbReference type="CCDS" id="CCDS86051.1"/>
<dbReference type="RefSeq" id="NP_001342386.1">
    <property type="nucleotide sequence ID" value="NM_001355457.3"/>
</dbReference>
<dbReference type="FunCoup" id="A0A1B0GTU1">
    <property type="interactions" value="1"/>
</dbReference>
<dbReference type="STRING" id="9606.ENSP00000498875"/>
<dbReference type="GlyGen" id="A0A1B0GTU1">
    <property type="glycosylation" value="2 sites"/>
</dbReference>
<dbReference type="iPTMnet" id="A0A1B0GTU1"/>
<dbReference type="PhosphoSitePlus" id="A0A1B0GTU1"/>
<dbReference type="BioMuta" id="ZC3H11B"/>
<dbReference type="jPOST" id="A0A1B0GTU1"/>
<dbReference type="MassIVE" id="A0A1B0GTU1"/>
<dbReference type="PeptideAtlas" id="A0A1B0GTU1"/>
<dbReference type="Ensembl" id="ENST00000651890.2">
    <property type="protein sequence ID" value="ENSP00000498875.1"/>
    <property type="gene ID" value="ENSG00000215817.9"/>
</dbReference>
<dbReference type="GeneID" id="643136"/>
<dbReference type="MANE-Select" id="ENST00000651890.2">
    <property type="protein sequence ID" value="ENSP00000498875.1"/>
    <property type="RefSeq nucleotide sequence ID" value="NM_001355457.3"/>
    <property type="RefSeq protein sequence ID" value="NP_001342386.1"/>
</dbReference>
<dbReference type="AGR" id="HGNC:25659"/>
<dbReference type="GeneCards" id="ZC3H11B"/>
<dbReference type="HGNC" id="HGNC:25659">
    <property type="gene designation" value="ZC3H11B"/>
</dbReference>
<dbReference type="HPA" id="ENSG00000215817">
    <property type="expression patterns" value="Tissue enriched (testis)"/>
</dbReference>
<dbReference type="neXtProt" id="NX_A0A1B0GTU1"/>
<dbReference type="OpenTargets" id="ENSG00000215817"/>
<dbReference type="VEuPathDB" id="HostDB:ENSG00000215817"/>
<dbReference type="GeneTree" id="ENSGT00920000149095"/>
<dbReference type="InParanoid" id="A0A1B0GTU1"/>
<dbReference type="OMA" id="LMWEISE"/>
<dbReference type="OrthoDB" id="5395350at2759"/>
<dbReference type="PAN-GO" id="A0A1B0GTU1">
    <property type="GO annotations" value="2 GO annotations based on evolutionary models"/>
</dbReference>
<dbReference type="PathwayCommons" id="A0A1B0GTU1"/>
<dbReference type="SignaLink" id="A0A1B0GTU1"/>
<dbReference type="Pharos" id="A0A1B0GTU1">
    <property type="development level" value="Tdark"/>
</dbReference>
<dbReference type="PRO" id="PR:A0A1B0GTU1"/>
<dbReference type="Proteomes" id="UP000005640">
    <property type="component" value="Chromosome 1"/>
</dbReference>
<dbReference type="Bgee" id="ENSG00000215817">
    <property type="expression patterns" value="Expressed in male germ line stem cell (sensu Vertebrata) in testis and 90 other cell types or tissues"/>
</dbReference>
<dbReference type="ExpressionAtlas" id="A0A1B0GTU1">
    <property type="expression patterns" value="baseline and differential"/>
</dbReference>
<dbReference type="GO" id="GO:0008270">
    <property type="term" value="F:zinc ion binding"/>
    <property type="evidence" value="ECO:0007669"/>
    <property type="project" value="UniProtKB-KW"/>
</dbReference>
<dbReference type="GO" id="GO:0016973">
    <property type="term" value="P:poly(A)+ mRNA export from nucleus"/>
    <property type="evidence" value="ECO:0000318"/>
    <property type="project" value="GO_Central"/>
</dbReference>
<dbReference type="FunFam" id="4.10.1000.10:FF:000024">
    <property type="entry name" value="Zinc finger CCCH domain-containing protein 11A"/>
    <property type="match status" value="1"/>
</dbReference>
<dbReference type="Gene3D" id="4.10.1000.10">
    <property type="entry name" value="Zinc finger, CCCH-type"/>
    <property type="match status" value="1"/>
</dbReference>
<dbReference type="InterPro" id="IPR041686">
    <property type="entry name" value="Znf-CCCH_3"/>
</dbReference>
<dbReference type="InterPro" id="IPR000571">
    <property type="entry name" value="Znf_CCCH"/>
</dbReference>
<dbReference type="PANTHER" id="PTHR15725:SF13">
    <property type="entry name" value="ZINC FINGER CCCH DOMAIN-CONTAINING PROTEIN 11B-RELATED"/>
    <property type="match status" value="1"/>
</dbReference>
<dbReference type="PANTHER" id="PTHR15725">
    <property type="entry name" value="ZN-FINGER, C-X8-C-X5-C-X3-H TYPE-CONTAINING"/>
    <property type="match status" value="1"/>
</dbReference>
<dbReference type="Pfam" id="PF15663">
    <property type="entry name" value="zf-CCCH_3"/>
    <property type="match status" value="1"/>
</dbReference>
<dbReference type="SMART" id="SM00356">
    <property type="entry name" value="ZnF_C3H1"/>
    <property type="match status" value="3"/>
</dbReference>
<dbReference type="PROSITE" id="PS50103">
    <property type="entry name" value="ZF_C3H1"/>
    <property type="match status" value="2"/>
</dbReference>
<proteinExistence type="evidence at protein level"/>
<evidence type="ECO:0000255" key="1"/>
<evidence type="ECO:0000255" key="2">
    <source>
        <dbReference type="PROSITE-ProRule" id="PRU00723"/>
    </source>
</evidence>
<evidence type="ECO:0000256" key="3">
    <source>
        <dbReference type="SAM" id="MobiDB-lite"/>
    </source>
</evidence>
<evidence type="ECO:0000305" key="4"/>
<evidence type="ECO:0000312" key="5">
    <source>
        <dbReference type="HGNC" id="HGNC:25659"/>
    </source>
</evidence>
<gene>
    <name evidence="5" type="primary">ZC3H11B</name>
    <name evidence="5" type="synonym">ZC3HDC11B</name>
</gene>